<reference key="1">
    <citation type="journal article" date="2008" name="PLoS Genet.">
        <title>Complete genome sequence of the N2-fixing broad host range endophyte Klebsiella pneumoniae 342 and virulence predictions verified in mice.</title>
        <authorList>
            <person name="Fouts D.E."/>
            <person name="Tyler H.L."/>
            <person name="DeBoy R.T."/>
            <person name="Daugherty S."/>
            <person name="Ren Q."/>
            <person name="Badger J.H."/>
            <person name="Durkin A.S."/>
            <person name="Huot H."/>
            <person name="Shrivastava S."/>
            <person name="Kothari S."/>
            <person name="Dodson R.J."/>
            <person name="Mohamoud Y."/>
            <person name="Khouri H."/>
            <person name="Roesch L.F.W."/>
            <person name="Krogfelt K.A."/>
            <person name="Struve C."/>
            <person name="Triplett E.W."/>
            <person name="Methe B.A."/>
        </authorList>
    </citation>
    <scope>NUCLEOTIDE SEQUENCE [LARGE SCALE GENOMIC DNA]</scope>
    <source>
        <strain>342</strain>
    </source>
</reference>
<keyword id="KW-0997">Cell inner membrane</keyword>
<keyword id="KW-1003">Cell membrane</keyword>
<keyword id="KW-0378">Hydrolase</keyword>
<keyword id="KW-0444">Lipid biosynthesis</keyword>
<keyword id="KW-0443">Lipid metabolism</keyword>
<keyword id="KW-0472">Membrane</keyword>
<keyword id="KW-0594">Phospholipid biosynthesis</keyword>
<keyword id="KW-1208">Phospholipid metabolism</keyword>
<keyword id="KW-0812">Transmembrane</keyword>
<keyword id="KW-1133">Transmembrane helix</keyword>
<sequence length="254" mass="28525">MRRVRYFLLALLVAILAALAGGYYWLHSGNPDALRKIVLQQCVPHQQQQQNPSPCAEVNLKGGYVLFKDRNGPLQYLLMPTYRINGTESPLLLDPLTPNFFWQAWQGREIMSQRHGAPVPDNAISLAINSRSGRTQNHFHIHISCLRPDVRAQLDKDAAAVSSRWLPLPGGLQGHEYLARRVTEAELAQRSPFLMLAEEVPEAREHMGRFALAMAQQSDGSLVLLATERNLLTLNRASAEEIQDHRCAILNANH</sequence>
<gene>
    <name evidence="1" type="primary">cdh</name>
    <name type="ordered locus">KPK_0089</name>
</gene>
<comment type="catalytic activity">
    <reaction evidence="1">
        <text>a CDP-1,2-diacyl-sn-glycerol + H2O = a 1,2-diacyl-sn-glycero-3-phosphate + CMP + 2 H(+)</text>
        <dbReference type="Rhea" id="RHEA:15221"/>
        <dbReference type="ChEBI" id="CHEBI:15377"/>
        <dbReference type="ChEBI" id="CHEBI:15378"/>
        <dbReference type="ChEBI" id="CHEBI:58332"/>
        <dbReference type="ChEBI" id="CHEBI:58608"/>
        <dbReference type="ChEBI" id="CHEBI:60377"/>
        <dbReference type="EC" id="3.6.1.26"/>
    </reaction>
</comment>
<comment type="pathway">
    <text evidence="1">Phospholipid metabolism; CDP-diacylglycerol degradation; phosphatidate from CDP-diacylglycerol: step 1/1.</text>
</comment>
<comment type="subcellular location">
    <subcellularLocation>
        <location evidence="1">Cell inner membrane</location>
        <topology evidence="1">Single-pass membrane protein</topology>
    </subcellularLocation>
</comment>
<comment type="similarity">
    <text evidence="1">Belongs to the Cdh family.</text>
</comment>
<evidence type="ECO:0000255" key="1">
    <source>
        <dbReference type="HAMAP-Rule" id="MF_00319"/>
    </source>
</evidence>
<protein>
    <recommendedName>
        <fullName evidence="1">CDP-diacylglycerol pyrophosphatase</fullName>
        <ecNumber evidence="1">3.6.1.26</ecNumber>
    </recommendedName>
    <alternativeName>
        <fullName evidence="1">CDP-diacylglycerol phosphatidylhydrolase</fullName>
    </alternativeName>
    <alternativeName>
        <fullName evidence="1">CDP-diglyceride hydrolase</fullName>
    </alternativeName>
</protein>
<organism>
    <name type="scientific">Klebsiella pneumoniae (strain 342)</name>
    <dbReference type="NCBI Taxonomy" id="507522"/>
    <lineage>
        <taxon>Bacteria</taxon>
        <taxon>Pseudomonadati</taxon>
        <taxon>Pseudomonadota</taxon>
        <taxon>Gammaproteobacteria</taxon>
        <taxon>Enterobacterales</taxon>
        <taxon>Enterobacteriaceae</taxon>
        <taxon>Klebsiella/Raoultella group</taxon>
        <taxon>Klebsiella</taxon>
        <taxon>Klebsiella pneumoniae complex</taxon>
    </lineage>
</organism>
<accession>B5XTD8</accession>
<name>CDH_KLEP3</name>
<proteinExistence type="inferred from homology"/>
<feature type="chain" id="PRO_1000115943" description="CDP-diacylglycerol pyrophosphatase">
    <location>
        <begin position="1"/>
        <end position="254"/>
    </location>
</feature>
<feature type="transmembrane region" description="Helical" evidence="1">
    <location>
        <begin position="6"/>
        <end position="26"/>
    </location>
</feature>
<dbReference type="EC" id="3.6.1.26" evidence="1"/>
<dbReference type="EMBL" id="CP000964">
    <property type="protein sequence ID" value="ACI10410.1"/>
    <property type="molecule type" value="Genomic_DNA"/>
</dbReference>
<dbReference type="SMR" id="B5XTD8"/>
<dbReference type="KEGG" id="kpe:KPK_0089"/>
<dbReference type="HOGENOM" id="CLU_077117_0_1_6"/>
<dbReference type="UniPathway" id="UPA00609">
    <property type="reaction ID" value="UER00664"/>
</dbReference>
<dbReference type="Proteomes" id="UP000001734">
    <property type="component" value="Chromosome"/>
</dbReference>
<dbReference type="GO" id="GO:0005886">
    <property type="term" value="C:plasma membrane"/>
    <property type="evidence" value="ECO:0007669"/>
    <property type="project" value="UniProtKB-SubCell"/>
</dbReference>
<dbReference type="GO" id="GO:0008715">
    <property type="term" value="F:CDP-diacylglycerol diphosphatase activity"/>
    <property type="evidence" value="ECO:0007669"/>
    <property type="project" value="UniProtKB-UniRule"/>
</dbReference>
<dbReference type="GO" id="GO:0046342">
    <property type="term" value="P:CDP-diacylglycerol catabolic process"/>
    <property type="evidence" value="ECO:0007669"/>
    <property type="project" value="UniProtKB-UniRule"/>
</dbReference>
<dbReference type="GO" id="GO:0008654">
    <property type="term" value="P:phospholipid biosynthetic process"/>
    <property type="evidence" value="ECO:0007669"/>
    <property type="project" value="UniProtKB-KW"/>
</dbReference>
<dbReference type="Gene3D" id="3.30.428.30">
    <property type="entry name" value="HIT family - CDH-like"/>
    <property type="match status" value="1"/>
</dbReference>
<dbReference type="HAMAP" id="MF_00319">
    <property type="entry name" value="Cdh"/>
    <property type="match status" value="1"/>
</dbReference>
<dbReference type="InterPro" id="IPR003763">
    <property type="entry name" value="CDP-diacylglyc_Pase"/>
</dbReference>
<dbReference type="InterPro" id="IPR015993">
    <property type="entry name" value="CDP-diacylglyc_Pase_proteobac"/>
</dbReference>
<dbReference type="InterPro" id="IPR036265">
    <property type="entry name" value="HIT-like_sf"/>
</dbReference>
<dbReference type="NCBIfam" id="TIGR00672">
    <property type="entry name" value="cdh"/>
    <property type="match status" value="1"/>
</dbReference>
<dbReference type="NCBIfam" id="NF003986">
    <property type="entry name" value="PRK05471.1-5"/>
    <property type="match status" value="1"/>
</dbReference>
<dbReference type="NCBIfam" id="NF003987">
    <property type="entry name" value="PRK05471.1-6"/>
    <property type="match status" value="1"/>
</dbReference>
<dbReference type="Pfam" id="PF02611">
    <property type="entry name" value="CDH"/>
    <property type="match status" value="1"/>
</dbReference>
<dbReference type="PIRSF" id="PIRSF001273">
    <property type="entry name" value="CDH"/>
    <property type="match status" value="1"/>
</dbReference>
<dbReference type="SUPFAM" id="SSF54197">
    <property type="entry name" value="HIT-like"/>
    <property type="match status" value="1"/>
</dbReference>